<organism>
    <name type="scientific">Streptococcus pyogenes serotype M12 (strain MGAS9429)</name>
    <dbReference type="NCBI Taxonomy" id="370551"/>
    <lineage>
        <taxon>Bacteria</taxon>
        <taxon>Bacillati</taxon>
        <taxon>Bacillota</taxon>
        <taxon>Bacilli</taxon>
        <taxon>Lactobacillales</taxon>
        <taxon>Streptococcaceae</taxon>
        <taxon>Streptococcus</taxon>
    </lineage>
</organism>
<proteinExistence type="inferred from homology"/>
<keyword id="KW-1003">Cell membrane</keyword>
<keyword id="KW-0255">Endonuclease</keyword>
<keyword id="KW-0378">Hydrolase</keyword>
<keyword id="KW-0472">Membrane</keyword>
<keyword id="KW-0540">Nuclease</keyword>
<keyword id="KW-0694">RNA-binding</keyword>
<keyword id="KW-0812">Transmembrane</keyword>
<keyword id="KW-1133">Transmembrane helix</keyword>
<sequence>MVNIILLIVSALIGLILGYALISIRLKSAKEAAELTLLNAEQEAVDIRGKAEVDAEHIKKTAKRESKANRKELLLEAKEEARKYREEIEQEFKSERQELKQLETRLAERSLTLDRKDENLSSKEKVLDSKEQSLTDKSKHIDERQLQVEKLEEEKKAELEKVAAMTIAEAREVILMETENKLTHEIATRIRDAERDIKDRTVKTAKDLLAQAMQRLAGEYVTEQTITSVHLPDDNMKGRIIGREGRNIRTLESLTGIDVIIDDTPEVVILSGFDPIRREIARMTLESLIADGRIHPARIEELVEKNRLEMDNRIREYGEAAAYEIGAPNLHPDLIKIMGRLQFRTSFGQNVLRHSVEVGKLAGILAGELGENVALARRAGFLHDMGKAIDREVEGSHVEIGMEFARKYKEHPVVVNTIASHHGDVEPDSVIAVLVAAADALSSARPGARNESMENYIKRLRDLEEIATSFDGVQNSFALQAGREIRIMVQPEKISDDQVVILSHKVREKIENNLDYPGNIKVTVIREMRAVDYAK</sequence>
<dbReference type="EC" id="3.1.-.-" evidence="1"/>
<dbReference type="EMBL" id="CP000259">
    <property type="protein sequence ID" value="ABF32524.1"/>
    <property type="molecule type" value="Genomic_DNA"/>
</dbReference>
<dbReference type="RefSeq" id="WP_002988954.1">
    <property type="nucleotide sequence ID" value="NC_008021.1"/>
</dbReference>
<dbReference type="SMR" id="Q1JKP5"/>
<dbReference type="KEGG" id="spk:MGAS9429_Spy1337"/>
<dbReference type="HOGENOM" id="CLU_028328_1_0_9"/>
<dbReference type="Proteomes" id="UP000002433">
    <property type="component" value="Chromosome"/>
</dbReference>
<dbReference type="GO" id="GO:0005886">
    <property type="term" value="C:plasma membrane"/>
    <property type="evidence" value="ECO:0007669"/>
    <property type="project" value="UniProtKB-SubCell"/>
</dbReference>
<dbReference type="GO" id="GO:0003723">
    <property type="term" value="F:RNA binding"/>
    <property type="evidence" value="ECO:0007669"/>
    <property type="project" value="UniProtKB-UniRule"/>
</dbReference>
<dbReference type="GO" id="GO:0004521">
    <property type="term" value="F:RNA endonuclease activity"/>
    <property type="evidence" value="ECO:0007669"/>
    <property type="project" value="UniProtKB-UniRule"/>
</dbReference>
<dbReference type="GO" id="GO:0006402">
    <property type="term" value="P:mRNA catabolic process"/>
    <property type="evidence" value="ECO:0007669"/>
    <property type="project" value="UniProtKB-UniRule"/>
</dbReference>
<dbReference type="CDD" id="cd00077">
    <property type="entry name" value="HDc"/>
    <property type="match status" value="1"/>
</dbReference>
<dbReference type="CDD" id="cd22431">
    <property type="entry name" value="KH-I_RNaseY"/>
    <property type="match status" value="1"/>
</dbReference>
<dbReference type="FunFam" id="1.10.3210.10:FF:000003">
    <property type="entry name" value="Ribonuclease Y"/>
    <property type="match status" value="1"/>
</dbReference>
<dbReference type="Gene3D" id="1.10.3210.10">
    <property type="entry name" value="Hypothetical protein af1432"/>
    <property type="match status" value="1"/>
</dbReference>
<dbReference type="Gene3D" id="3.30.1370.10">
    <property type="entry name" value="K Homology domain, type 1"/>
    <property type="match status" value="1"/>
</dbReference>
<dbReference type="HAMAP" id="MF_00335">
    <property type="entry name" value="RNase_Y"/>
    <property type="match status" value="1"/>
</dbReference>
<dbReference type="InterPro" id="IPR003607">
    <property type="entry name" value="HD/PDEase_dom"/>
</dbReference>
<dbReference type="InterPro" id="IPR006674">
    <property type="entry name" value="HD_domain"/>
</dbReference>
<dbReference type="InterPro" id="IPR006675">
    <property type="entry name" value="HDIG_dom"/>
</dbReference>
<dbReference type="InterPro" id="IPR004087">
    <property type="entry name" value="KH_dom"/>
</dbReference>
<dbReference type="InterPro" id="IPR004088">
    <property type="entry name" value="KH_dom_type_1"/>
</dbReference>
<dbReference type="InterPro" id="IPR036612">
    <property type="entry name" value="KH_dom_type_1_sf"/>
</dbReference>
<dbReference type="InterPro" id="IPR017705">
    <property type="entry name" value="Ribonuclease_Y"/>
</dbReference>
<dbReference type="InterPro" id="IPR022711">
    <property type="entry name" value="RNase_Y_N"/>
</dbReference>
<dbReference type="NCBIfam" id="TIGR00277">
    <property type="entry name" value="HDIG"/>
    <property type="match status" value="1"/>
</dbReference>
<dbReference type="NCBIfam" id="NF000997">
    <property type="entry name" value="PRK00106.1"/>
    <property type="match status" value="1"/>
</dbReference>
<dbReference type="NCBIfam" id="TIGR03319">
    <property type="entry name" value="RNase_Y"/>
    <property type="match status" value="1"/>
</dbReference>
<dbReference type="PANTHER" id="PTHR12826">
    <property type="entry name" value="RIBONUCLEASE Y"/>
    <property type="match status" value="1"/>
</dbReference>
<dbReference type="PANTHER" id="PTHR12826:SF15">
    <property type="entry name" value="RIBONUCLEASE Y"/>
    <property type="match status" value="1"/>
</dbReference>
<dbReference type="Pfam" id="PF01966">
    <property type="entry name" value="HD"/>
    <property type="match status" value="1"/>
</dbReference>
<dbReference type="Pfam" id="PF00013">
    <property type="entry name" value="KH_1"/>
    <property type="match status" value="1"/>
</dbReference>
<dbReference type="Pfam" id="PF12072">
    <property type="entry name" value="RNase_Y_N"/>
    <property type="match status" value="1"/>
</dbReference>
<dbReference type="SMART" id="SM00471">
    <property type="entry name" value="HDc"/>
    <property type="match status" value="1"/>
</dbReference>
<dbReference type="SMART" id="SM00322">
    <property type="entry name" value="KH"/>
    <property type="match status" value="1"/>
</dbReference>
<dbReference type="SUPFAM" id="SSF54791">
    <property type="entry name" value="Eukaryotic type KH-domain (KH-domain type I)"/>
    <property type="match status" value="1"/>
</dbReference>
<dbReference type="SUPFAM" id="SSF109604">
    <property type="entry name" value="HD-domain/PDEase-like"/>
    <property type="match status" value="1"/>
</dbReference>
<dbReference type="PROSITE" id="PS51831">
    <property type="entry name" value="HD"/>
    <property type="match status" value="1"/>
</dbReference>
<dbReference type="PROSITE" id="PS50084">
    <property type="entry name" value="KH_TYPE_1"/>
    <property type="match status" value="1"/>
</dbReference>
<comment type="function">
    <text evidence="1">Endoribonuclease that initiates mRNA decay.</text>
</comment>
<comment type="subcellular location">
    <subcellularLocation>
        <location evidence="1">Cell membrane</location>
        <topology evidence="1">Single-pass membrane protein</topology>
    </subcellularLocation>
</comment>
<comment type="similarity">
    <text evidence="1">Belongs to the RNase Y family.</text>
</comment>
<reference key="1">
    <citation type="journal article" date="2006" name="Proc. Natl. Acad. Sci. U.S.A.">
        <title>Molecular genetic anatomy of inter- and intraserotype variation in the human bacterial pathogen group A Streptococcus.</title>
        <authorList>
            <person name="Beres S.B."/>
            <person name="Richter E.W."/>
            <person name="Nagiec M.J."/>
            <person name="Sumby P."/>
            <person name="Porcella S.F."/>
            <person name="DeLeo F.R."/>
            <person name="Musser J.M."/>
        </authorList>
    </citation>
    <scope>NUCLEOTIDE SEQUENCE [LARGE SCALE GENOMIC DNA]</scope>
    <source>
        <strain>MGAS9429</strain>
    </source>
</reference>
<feature type="chain" id="PRO_0000344944" description="Ribonuclease Y">
    <location>
        <begin position="1"/>
        <end position="535"/>
    </location>
</feature>
<feature type="transmembrane region" description="Helical" evidence="1">
    <location>
        <begin position="4"/>
        <end position="24"/>
    </location>
</feature>
<feature type="domain" description="KH" evidence="1">
    <location>
        <begin position="225"/>
        <end position="285"/>
    </location>
</feature>
<feature type="domain" description="HD" evidence="2">
    <location>
        <begin position="351"/>
        <end position="444"/>
    </location>
</feature>
<feature type="region of interest" description="Disordered" evidence="3">
    <location>
        <begin position="118"/>
        <end position="141"/>
    </location>
</feature>
<evidence type="ECO:0000255" key="1">
    <source>
        <dbReference type="HAMAP-Rule" id="MF_00335"/>
    </source>
</evidence>
<evidence type="ECO:0000255" key="2">
    <source>
        <dbReference type="PROSITE-ProRule" id="PRU01175"/>
    </source>
</evidence>
<evidence type="ECO:0000256" key="3">
    <source>
        <dbReference type="SAM" id="MobiDB-lite"/>
    </source>
</evidence>
<accession>Q1JKP5</accession>
<gene>
    <name evidence="1" type="primary">rny</name>
    <name type="ordered locus">MGAS9429_Spy1337</name>
</gene>
<protein>
    <recommendedName>
        <fullName evidence="1">Ribonuclease Y</fullName>
        <shortName evidence="1">RNase Y</shortName>
        <ecNumber evidence="1">3.1.-.-</ecNumber>
    </recommendedName>
</protein>
<name>RNY_STRPC</name>